<proteinExistence type="inferred from homology"/>
<evidence type="ECO:0000255" key="1">
    <source>
        <dbReference type="HAMAP-Rule" id="MF_01391"/>
    </source>
</evidence>
<keyword id="KW-0150">Chloroplast</keyword>
<keyword id="KW-0201">Cytochrome c-type biogenesis</keyword>
<keyword id="KW-0472">Membrane</keyword>
<keyword id="KW-0934">Plastid</keyword>
<keyword id="KW-0793">Thylakoid</keyword>
<keyword id="KW-0812">Transmembrane</keyword>
<keyword id="KW-1133">Transmembrane helix</keyword>
<geneLocation type="chloroplast"/>
<accession>Q9BBP4</accession>
<comment type="function">
    <text evidence="1">Required during biogenesis of c-type cytochromes (cytochrome c6 and cytochrome f) at the step of heme attachment.</text>
</comment>
<comment type="subunit">
    <text evidence="1">May interact with Ccs1.</text>
</comment>
<comment type="subcellular location">
    <subcellularLocation>
        <location evidence="1">Plastid</location>
        <location evidence="1">Chloroplast thylakoid membrane</location>
        <topology evidence="1">Multi-pass membrane protein</topology>
    </subcellularLocation>
</comment>
<comment type="similarity">
    <text evidence="1">Belongs to the CcmF/CycK/Ccl1/NrfE/CcsA family.</text>
</comment>
<reference key="1">
    <citation type="journal article" date="2000" name="DNA Res.">
        <title>Complete structure of the chloroplast genome of a legume, Lotus japonicus.</title>
        <authorList>
            <person name="Kato T."/>
            <person name="Kaneko T."/>
            <person name="Sato S."/>
            <person name="Nakamura Y."/>
            <person name="Tabata S."/>
        </authorList>
    </citation>
    <scope>NUCLEOTIDE SEQUENCE [LARGE SCALE GENOMIC DNA]</scope>
    <source>
        <strain>cv. Miyakojima MG-20</strain>
    </source>
</reference>
<name>CCSA_LOTJA</name>
<feature type="chain" id="PRO_0000201605" description="Cytochrome c biogenesis protein CcsA">
    <location>
        <begin position="1"/>
        <end position="323"/>
    </location>
</feature>
<feature type="transmembrane region" description="Helical" evidence="1">
    <location>
        <begin position="17"/>
        <end position="37"/>
    </location>
</feature>
<feature type="transmembrane region" description="Helical" evidence="1">
    <location>
        <begin position="44"/>
        <end position="64"/>
    </location>
</feature>
<feature type="transmembrane region" description="Helical" evidence="1">
    <location>
        <begin position="68"/>
        <end position="88"/>
    </location>
</feature>
<feature type="transmembrane region" description="Helical" evidence="1">
    <location>
        <begin position="98"/>
        <end position="118"/>
    </location>
</feature>
<feature type="transmembrane region" description="Helical" evidence="1">
    <location>
        <begin position="143"/>
        <end position="163"/>
    </location>
</feature>
<feature type="transmembrane region" description="Helical" evidence="1">
    <location>
        <begin position="229"/>
        <end position="249"/>
    </location>
</feature>
<feature type="transmembrane region" description="Helical" evidence="1">
    <location>
        <begin position="262"/>
        <end position="279"/>
    </location>
</feature>
<feature type="transmembrane region" description="Helical" evidence="1">
    <location>
        <begin position="291"/>
        <end position="311"/>
    </location>
</feature>
<dbReference type="EMBL" id="AP002983">
    <property type="protein sequence ID" value="BAB33244.1"/>
    <property type="molecule type" value="Genomic_DNA"/>
</dbReference>
<dbReference type="RefSeq" id="NP_084844.1">
    <property type="nucleotide sequence ID" value="NC_002694.1"/>
</dbReference>
<dbReference type="SMR" id="Q9BBP4"/>
<dbReference type="GeneID" id="802903"/>
<dbReference type="OMA" id="YESLCFL"/>
<dbReference type="GO" id="GO:0009535">
    <property type="term" value="C:chloroplast thylakoid membrane"/>
    <property type="evidence" value="ECO:0007669"/>
    <property type="project" value="UniProtKB-SubCell"/>
</dbReference>
<dbReference type="GO" id="GO:0005886">
    <property type="term" value="C:plasma membrane"/>
    <property type="evidence" value="ECO:0007669"/>
    <property type="project" value="TreeGrafter"/>
</dbReference>
<dbReference type="GO" id="GO:0020037">
    <property type="term" value="F:heme binding"/>
    <property type="evidence" value="ECO:0007669"/>
    <property type="project" value="InterPro"/>
</dbReference>
<dbReference type="GO" id="GO:0017004">
    <property type="term" value="P:cytochrome complex assembly"/>
    <property type="evidence" value="ECO:0007669"/>
    <property type="project" value="UniProtKB-UniRule"/>
</dbReference>
<dbReference type="HAMAP" id="MF_01391">
    <property type="entry name" value="CytC_CcsA"/>
    <property type="match status" value="1"/>
</dbReference>
<dbReference type="InterPro" id="IPR002541">
    <property type="entry name" value="Cyt_c_assembly"/>
</dbReference>
<dbReference type="InterPro" id="IPR017562">
    <property type="entry name" value="Cyt_c_biogenesis_CcsA"/>
</dbReference>
<dbReference type="InterPro" id="IPR045062">
    <property type="entry name" value="Cyt_c_biogenesis_CcsA/CcmC"/>
</dbReference>
<dbReference type="NCBIfam" id="TIGR03144">
    <property type="entry name" value="cytochr_II_ccsB"/>
    <property type="match status" value="1"/>
</dbReference>
<dbReference type="PANTHER" id="PTHR30071:SF1">
    <property type="entry name" value="CYTOCHROME B_B6 PROTEIN-RELATED"/>
    <property type="match status" value="1"/>
</dbReference>
<dbReference type="PANTHER" id="PTHR30071">
    <property type="entry name" value="HEME EXPORTER PROTEIN C"/>
    <property type="match status" value="1"/>
</dbReference>
<dbReference type="Pfam" id="PF01578">
    <property type="entry name" value="Cytochrom_C_asm"/>
    <property type="match status" value="1"/>
</dbReference>
<sequence length="323" mass="37186">MIFSTLEHILTHISFSVVSIVISIHLITLFVNQIVGFYDSSKKGMIITFLCITGLLITRWFFSGHLPFSDLYESLIFLSWGFSIFYMVPRFKKQKNDLSTIIAPSVIFTQGFATSGLLTEMHQSVILVPALQSHWLMMHVSMMILGYAALLCGSLLSVAILVITFQELIPILGKSKRLSFLYESFDYAEIKYINMNERNNVLRKTSFSSYRNYYRYQFIQQLDRWGYRIISLGFIFLTIGILSGAVWANEAWGSYWNWDPKETWAFITWTIFAIYLHSRKNKKLEGLNSSIVASIGFLIIWICYFGVNLLGIGLHNYGSFTSN</sequence>
<protein>
    <recommendedName>
        <fullName evidence="1">Cytochrome c biogenesis protein CcsA</fullName>
    </recommendedName>
</protein>
<gene>
    <name evidence="1" type="primary">ccsA</name>
</gene>
<organism>
    <name type="scientific">Lotus japonicus</name>
    <name type="common">Lotus corniculatus var. japonicus</name>
    <dbReference type="NCBI Taxonomy" id="34305"/>
    <lineage>
        <taxon>Eukaryota</taxon>
        <taxon>Viridiplantae</taxon>
        <taxon>Streptophyta</taxon>
        <taxon>Embryophyta</taxon>
        <taxon>Tracheophyta</taxon>
        <taxon>Spermatophyta</taxon>
        <taxon>Magnoliopsida</taxon>
        <taxon>eudicotyledons</taxon>
        <taxon>Gunneridae</taxon>
        <taxon>Pentapetalae</taxon>
        <taxon>rosids</taxon>
        <taxon>fabids</taxon>
        <taxon>Fabales</taxon>
        <taxon>Fabaceae</taxon>
        <taxon>Papilionoideae</taxon>
        <taxon>50 kb inversion clade</taxon>
        <taxon>NPAAA clade</taxon>
        <taxon>Hologalegina</taxon>
        <taxon>robinioid clade</taxon>
        <taxon>Loteae</taxon>
        <taxon>Lotus</taxon>
    </lineage>
</organism>